<organism>
    <name type="scientific">Schizosaccharomyces pombe (strain 972 / ATCC 24843)</name>
    <name type="common">Fission yeast</name>
    <dbReference type="NCBI Taxonomy" id="284812"/>
    <lineage>
        <taxon>Eukaryota</taxon>
        <taxon>Fungi</taxon>
        <taxon>Dikarya</taxon>
        <taxon>Ascomycota</taxon>
        <taxon>Taphrinomycotina</taxon>
        <taxon>Schizosaccharomycetes</taxon>
        <taxon>Schizosaccharomycetales</taxon>
        <taxon>Schizosaccharomycetaceae</taxon>
        <taxon>Schizosaccharomyces</taxon>
    </lineage>
</organism>
<comment type="subcellular location">
    <subcellularLocation>
        <location evidence="3">Mitochondrion</location>
    </subcellularLocation>
</comment>
<reference key="1">
    <citation type="journal article" date="2002" name="Nature">
        <title>The genome sequence of Schizosaccharomyces pombe.</title>
        <authorList>
            <person name="Wood V."/>
            <person name="Gwilliam R."/>
            <person name="Rajandream M.A."/>
            <person name="Lyne M.H."/>
            <person name="Lyne R."/>
            <person name="Stewart A."/>
            <person name="Sgouros J.G."/>
            <person name="Peat N."/>
            <person name="Hayles J."/>
            <person name="Baker S.G."/>
            <person name="Basham D."/>
            <person name="Bowman S."/>
            <person name="Brooks K."/>
            <person name="Brown D."/>
            <person name="Brown S."/>
            <person name="Chillingworth T."/>
            <person name="Churcher C.M."/>
            <person name="Collins M."/>
            <person name="Connor R."/>
            <person name="Cronin A."/>
            <person name="Davis P."/>
            <person name="Feltwell T."/>
            <person name="Fraser A."/>
            <person name="Gentles S."/>
            <person name="Goble A."/>
            <person name="Hamlin N."/>
            <person name="Harris D.E."/>
            <person name="Hidalgo J."/>
            <person name="Hodgson G."/>
            <person name="Holroyd S."/>
            <person name="Hornsby T."/>
            <person name="Howarth S."/>
            <person name="Huckle E.J."/>
            <person name="Hunt S."/>
            <person name="Jagels K."/>
            <person name="James K.D."/>
            <person name="Jones L."/>
            <person name="Jones M."/>
            <person name="Leather S."/>
            <person name="McDonald S."/>
            <person name="McLean J."/>
            <person name="Mooney P."/>
            <person name="Moule S."/>
            <person name="Mungall K.L."/>
            <person name="Murphy L.D."/>
            <person name="Niblett D."/>
            <person name="Odell C."/>
            <person name="Oliver K."/>
            <person name="O'Neil S."/>
            <person name="Pearson D."/>
            <person name="Quail M.A."/>
            <person name="Rabbinowitsch E."/>
            <person name="Rutherford K.M."/>
            <person name="Rutter S."/>
            <person name="Saunders D."/>
            <person name="Seeger K."/>
            <person name="Sharp S."/>
            <person name="Skelton J."/>
            <person name="Simmonds M.N."/>
            <person name="Squares R."/>
            <person name="Squares S."/>
            <person name="Stevens K."/>
            <person name="Taylor K."/>
            <person name="Taylor R.G."/>
            <person name="Tivey A."/>
            <person name="Walsh S.V."/>
            <person name="Warren T."/>
            <person name="Whitehead S."/>
            <person name="Woodward J.R."/>
            <person name="Volckaert G."/>
            <person name="Aert R."/>
            <person name="Robben J."/>
            <person name="Grymonprez B."/>
            <person name="Weltjens I."/>
            <person name="Vanstreels E."/>
            <person name="Rieger M."/>
            <person name="Schaefer M."/>
            <person name="Mueller-Auer S."/>
            <person name="Gabel C."/>
            <person name="Fuchs M."/>
            <person name="Duesterhoeft A."/>
            <person name="Fritzc C."/>
            <person name="Holzer E."/>
            <person name="Moestl D."/>
            <person name="Hilbert H."/>
            <person name="Borzym K."/>
            <person name="Langer I."/>
            <person name="Beck A."/>
            <person name="Lehrach H."/>
            <person name="Reinhardt R."/>
            <person name="Pohl T.M."/>
            <person name="Eger P."/>
            <person name="Zimmermann W."/>
            <person name="Wedler H."/>
            <person name="Wambutt R."/>
            <person name="Purnelle B."/>
            <person name="Goffeau A."/>
            <person name="Cadieu E."/>
            <person name="Dreano S."/>
            <person name="Gloux S."/>
            <person name="Lelaure V."/>
            <person name="Mottier S."/>
            <person name="Galibert F."/>
            <person name="Aves S.J."/>
            <person name="Xiang Z."/>
            <person name="Hunt C."/>
            <person name="Moore K."/>
            <person name="Hurst S.M."/>
            <person name="Lucas M."/>
            <person name="Rochet M."/>
            <person name="Gaillardin C."/>
            <person name="Tallada V.A."/>
            <person name="Garzon A."/>
            <person name="Thode G."/>
            <person name="Daga R.R."/>
            <person name="Cruzado L."/>
            <person name="Jimenez J."/>
            <person name="Sanchez M."/>
            <person name="del Rey F."/>
            <person name="Benito J."/>
            <person name="Dominguez A."/>
            <person name="Revuelta J.L."/>
            <person name="Moreno S."/>
            <person name="Armstrong J."/>
            <person name="Forsburg S.L."/>
            <person name="Cerutti L."/>
            <person name="Lowe T."/>
            <person name="McCombie W.R."/>
            <person name="Paulsen I."/>
            <person name="Potashkin J."/>
            <person name="Shpakovski G.V."/>
            <person name="Ussery D."/>
            <person name="Barrell B.G."/>
            <person name="Nurse P."/>
        </authorList>
    </citation>
    <scope>NUCLEOTIDE SEQUENCE [LARGE SCALE GENOMIC DNA]</scope>
    <source>
        <strain>972 / ATCC 24843</strain>
    </source>
</reference>
<reference key="2">
    <citation type="journal article" date="2006" name="Nat. Biotechnol.">
        <title>ORFeome cloning and global analysis of protein localization in the fission yeast Schizosaccharomyces pombe.</title>
        <authorList>
            <person name="Matsuyama A."/>
            <person name="Arai R."/>
            <person name="Yashiroda Y."/>
            <person name="Shirai A."/>
            <person name="Kamata A."/>
            <person name="Sekido S."/>
            <person name="Kobayashi Y."/>
            <person name="Hashimoto A."/>
            <person name="Hamamoto M."/>
            <person name="Hiraoka Y."/>
            <person name="Horinouchi S."/>
            <person name="Yoshida M."/>
        </authorList>
    </citation>
    <scope>SUBCELLULAR LOCATION [LARGE SCALE ANALYSIS]</scope>
</reference>
<keyword id="KW-0496">Mitochondrion</keyword>
<keyword id="KW-1185">Reference proteome</keyword>
<keyword id="KW-0809">Transit peptide</keyword>
<sequence>MLFRIPTLFTLFLACFSLVSGVFGYSPMFGSNTIELNSKNFRKFVKAKGPSLVVFYAPWCGYCKKLVPTYQKLASNLHSLLPVTAVDCDADQNRAVCSQYQVQGFPTIKLVYPSSKGSSLSSTDYNGDRSYKSLQKFVSDSIPSKVKILTSEAKTQKFIQDAQNSSKVILISQKMKPTLLYKSLSNEFSSLPFSFMPAKANVNDLFNISAYVDTSDLPILFIKHPNNGTSFFSNSLNRDSIVEFLQSSIKDNNFSEYLATFCSKKSCIITIQDKDSDSGIDESIRKKYPKLHFVRLGRNTTVAERLEDTLDLGYSDTFLLSLKKSHYNAKPYGKPLRRWLEDIQVQQAGPSVSLPNDLLSKIK</sequence>
<evidence type="ECO:0000255" key="1"/>
<evidence type="ECO:0000255" key="2">
    <source>
        <dbReference type="PROSITE-ProRule" id="PRU00691"/>
    </source>
</evidence>
<evidence type="ECO:0000269" key="3">
    <source>
    </source>
</evidence>
<proteinExistence type="predicted"/>
<gene>
    <name type="ORF">SPAC13F5.05</name>
</gene>
<dbReference type="EMBL" id="CU329670">
    <property type="protein sequence ID" value="CAB11768.2"/>
    <property type="molecule type" value="Genomic_DNA"/>
</dbReference>
<dbReference type="PIR" id="T37630">
    <property type="entry name" value="T37630"/>
</dbReference>
<dbReference type="SMR" id="O13704"/>
<dbReference type="BioGRID" id="279287">
    <property type="interactions" value="3"/>
</dbReference>
<dbReference type="FunCoup" id="O13704">
    <property type="interactions" value="86"/>
</dbReference>
<dbReference type="STRING" id="284812.O13704"/>
<dbReference type="iPTMnet" id="O13704"/>
<dbReference type="PaxDb" id="4896-SPAC13F5.05.1"/>
<dbReference type="EnsemblFungi" id="SPAC13F5.05.1">
    <property type="protein sequence ID" value="SPAC13F5.05.1:pep"/>
    <property type="gene ID" value="SPAC13F5.05"/>
</dbReference>
<dbReference type="KEGG" id="spo:2542841"/>
<dbReference type="PomBase" id="SPAC13F5.05"/>
<dbReference type="VEuPathDB" id="FungiDB:SPAC13F5.05"/>
<dbReference type="eggNOG" id="KOG0191">
    <property type="taxonomic scope" value="Eukaryota"/>
</dbReference>
<dbReference type="HOGENOM" id="CLU_765385_0_0_1"/>
<dbReference type="InParanoid" id="O13704"/>
<dbReference type="OMA" id="YLDSFCT"/>
<dbReference type="PhylomeDB" id="O13704"/>
<dbReference type="PRO" id="PR:O13704"/>
<dbReference type="Proteomes" id="UP000002485">
    <property type="component" value="Chromosome I"/>
</dbReference>
<dbReference type="GO" id="GO:0005788">
    <property type="term" value="C:endoplasmic reticulum lumen"/>
    <property type="evidence" value="ECO:0000303"/>
    <property type="project" value="PomBase"/>
</dbReference>
<dbReference type="GO" id="GO:0005739">
    <property type="term" value="C:mitochondrion"/>
    <property type="evidence" value="ECO:0007005"/>
    <property type="project" value="PomBase"/>
</dbReference>
<dbReference type="GO" id="GO:0003756">
    <property type="term" value="F:protein disulfide isomerase activity"/>
    <property type="evidence" value="ECO:0000266"/>
    <property type="project" value="PomBase"/>
</dbReference>
<dbReference type="GO" id="GO:0015035">
    <property type="term" value="F:protein-disulfide reductase activity"/>
    <property type="evidence" value="ECO:0000266"/>
    <property type="project" value="PomBase"/>
</dbReference>
<dbReference type="GO" id="GO:0034975">
    <property type="term" value="P:protein folding in endoplasmic reticulum"/>
    <property type="evidence" value="ECO:0000305"/>
    <property type="project" value="PomBase"/>
</dbReference>
<dbReference type="CDD" id="cd03002">
    <property type="entry name" value="PDI_a_MPD1_like"/>
    <property type="match status" value="1"/>
</dbReference>
<dbReference type="Gene3D" id="3.40.30.10">
    <property type="entry name" value="Glutaredoxin"/>
    <property type="match status" value="1"/>
</dbReference>
<dbReference type="InterPro" id="IPR036249">
    <property type="entry name" value="Thioredoxin-like_sf"/>
</dbReference>
<dbReference type="InterPro" id="IPR017937">
    <property type="entry name" value="Thioredoxin_CS"/>
</dbReference>
<dbReference type="InterPro" id="IPR013766">
    <property type="entry name" value="Thioredoxin_domain"/>
</dbReference>
<dbReference type="PANTHER" id="PTHR45815">
    <property type="entry name" value="PROTEIN DISULFIDE-ISOMERASE A6"/>
    <property type="match status" value="1"/>
</dbReference>
<dbReference type="PANTHER" id="PTHR45815:SF3">
    <property type="entry name" value="PROTEIN DISULFIDE-ISOMERASE A6"/>
    <property type="match status" value="1"/>
</dbReference>
<dbReference type="Pfam" id="PF00085">
    <property type="entry name" value="Thioredoxin"/>
    <property type="match status" value="1"/>
</dbReference>
<dbReference type="SUPFAM" id="SSF52833">
    <property type="entry name" value="Thioredoxin-like"/>
    <property type="match status" value="1"/>
</dbReference>
<dbReference type="PROSITE" id="PS00194">
    <property type="entry name" value="THIOREDOXIN_1"/>
    <property type="match status" value="1"/>
</dbReference>
<dbReference type="PROSITE" id="PS51352">
    <property type="entry name" value="THIOREDOXIN_2"/>
    <property type="match status" value="1"/>
</dbReference>
<protein>
    <recommendedName>
        <fullName>Thioredoxin domain-containing protein C13F5.05, mitochondrial</fullName>
    </recommendedName>
</protein>
<feature type="transit peptide" description="Mitochondrion" evidence="1">
    <location>
        <begin position="1"/>
        <end position="24"/>
    </location>
</feature>
<feature type="chain" id="PRO_0000303924" description="Thioredoxin domain-containing protein C13F5.05, mitochondrial">
    <location>
        <begin position="25"/>
        <end position="363"/>
    </location>
</feature>
<feature type="domain" description="Thioredoxin" evidence="2">
    <location>
        <begin position="32"/>
        <end position="141"/>
    </location>
</feature>
<name>YEU5_SCHPO</name>
<accession>O13704</accession>